<dbReference type="EMBL" id="X53423">
    <property type="protein sequence ID" value="CAA37511.1"/>
    <property type="molecule type" value="Genomic_DNA"/>
</dbReference>
<dbReference type="PIR" id="E32998">
    <property type="entry name" value="E32998"/>
</dbReference>
<dbReference type="GO" id="GO:0042600">
    <property type="term" value="C:egg chorion"/>
    <property type="evidence" value="ECO:0007669"/>
    <property type="project" value="InterPro"/>
</dbReference>
<dbReference type="GO" id="GO:0005576">
    <property type="term" value="C:extracellular region"/>
    <property type="evidence" value="ECO:0007669"/>
    <property type="project" value="UniProtKB-SubCell"/>
</dbReference>
<dbReference type="InterPro" id="IPR008450">
    <property type="entry name" value="Chorion_S16"/>
</dbReference>
<dbReference type="Pfam" id="PF05836">
    <property type="entry name" value="Chorion_S16"/>
    <property type="match status" value="1"/>
</dbReference>
<organism>
    <name type="scientific">Drosophila subobscura</name>
    <name type="common">Fruit fly</name>
    <dbReference type="NCBI Taxonomy" id="7241"/>
    <lineage>
        <taxon>Eukaryota</taxon>
        <taxon>Metazoa</taxon>
        <taxon>Ecdysozoa</taxon>
        <taxon>Arthropoda</taxon>
        <taxon>Hexapoda</taxon>
        <taxon>Insecta</taxon>
        <taxon>Pterygota</taxon>
        <taxon>Neoptera</taxon>
        <taxon>Endopterygota</taxon>
        <taxon>Diptera</taxon>
        <taxon>Brachycera</taxon>
        <taxon>Muscomorpha</taxon>
        <taxon>Ephydroidea</taxon>
        <taxon>Drosophilidae</taxon>
        <taxon>Drosophila</taxon>
        <taxon>Sophophora</taxon>
    </lineage>
</organism>
<comment type="function">
    <text evidence="1">Chorion membrane (egg shell) protein; plays a role in protecting the egg from the environment.</text>
</comment>
<comment type="subcellular location">
    <subcellularLocation>
        <location evidence="1">Secreted</location>
    </subcellularLocation>
</comment>
<comment type="similarity">
    <text evidence="3">Belongs to the chorion protein S16 family.</text>
</comment>
<sequence length="141" mass="14837">MSANNMRLLCLLLACYISAIVAHRPSYRSSGSDRYVDVVRASETAEAQAAALTNAAGAAASAAKLDGADWYALNRYGWEQGRPLLAKPYGPLDNLYAAALPPRSFVAEIDPVFKKSHYGGAYGGKSVTLNTGAKVAVAALN</sequence>
<gene>
    <name type="primary">Cp16</name>
    <name type="synonym">S16</name>
</gene>
<accession>P24511</accession>
<keyword id="KW-0964">Secreted</keyword>
<keyword id="KW-0732">Signal</keyword>
<proteinExistence type="inferred from homology"/>
<name>CH16_DROSU</name>
<protein>
    <recommendedName>
        <fullName>Chorion protein S16</fullName>
    </recommendedName>
</protein>
<feature type="signal peptide" evidence="2">
    <location>
        <begin position="1"/>
        <end position="22"/>
    </location>
</feature>
<feature type="chain" id="PRO_0000089618" description="Chorion protein S16">
    <location>
        <begin position="23"/>
        <end position="141"/>
    </location>
</feature>
<reference key="1">
    <citation type="journal article" date="1989" name="J. Mol. Evol.">
        <title>Evolution of the autosomal chorion cluster in Drosophila. II. Chorion gene expression and sequence comparisons of the s16 and s19 genes in evolutionarily distant species.</title>
        <authorList>
            <person name="Fenerjian M.G."/>
            <person name="Martinez-Cruzado J.C."/>
            <person name="Swimmer C."/>
            <person name="King D."/>
            <person name="Kafatos F.C."/>
        </authorList>
    </citation>
    <scope>NUCLEOTIDE SEQUENCE [GENOMIC DNA]</scope>
</reference>
<evidence type="ECO:0000250" key="1"/>
<evidence type="ECO:0000255" key="2"/>
<evidence type="ECO:0000305" key="3"/>